<dbReference type="EC" id="2.7.1.148" evidence="1"/>
<dbReference type="EMBL" id="CP000705">
    <property type="protein sequence ID" value="ABQ82485.1"/>
    <property type="molecule type" value="Genomic_DNA"/>
</dbReference>
<dbReference type="RefSeq" id="WP_003667188.1">
    <property type="nucleotide sequence ID" value="NZ_AZDD01000005.1"/>
</dbReference>
<dbReference type="SMR" id="A5VI11"/>
<dbReference type="STRING" id="557436.Lreu_0215"/>
<dbReference type="KEGG" id="lre:Lreu_0215"/>
<dbReference type="PATRIC" id="fig|557436.17.peg.1556"/>
<dbReference type="eggNOG" id="COG1947">
    <property type="taxonomic scope" value="Bacteria"/>
</dbReference>
<dbReference type="HOGENOM" id="CLU_053057_1_1_9"/>
<dbReference type="UniPathway" id="UPA00056">
    <property type="reaction ID" value="UER00094"/>
</dbReference>
<dbReference type="Proteomes" id="UP000001991">
    <property type="component" value="Chromosome"/>
</dbReference>
<dbReference type="GO" id="GO:0050515">
    <property type="term" value="F:4-(cytidine 5'-diphospho)-2-C-methyl-D-erythritol kinase activity"/>
    <property type="evidence" value="ECO:0007669"/>
    <property type="project" value="UniProtKB-UniRule"/>
</dbReference>
<dbReference type="GO" id="GO:0005524">
    <property type="term" value="F:ATP binding"/>
    <property type="evidence" value="ECO:0007669"/>
    <property type="project" value="UniProtKB-UniRule"/>
</dbReference>
<dbReference type="GO" id="GO:0019288">
    <property type="term" value="P:isopentenyl diphosphate biosynthetic process, methylerythritol 4-phosphate pathway"/>
    <property type="evidence" value="ECO:0007669"/>
    <property type="project" value="UniProtKB-UniRule"/>
</dbReference>
<dbReference type="GO" id="GO:0016114">
    <property type="term" value="P:terpenoid biosynthetic process"/>
    <property type="evidence" value="ECO:0007669"/>
    <property type="project" value="InterPro"/>
</dbReference>
<dbReference type="Gene3D" id="3.30.230.10">
    <property type="match status" value="1"/>
</dbReference>
<dbReference type="Gene3D" id="3.30.70.890">
    <property type="entry name" value="GHMP kinase, C-terminal domain"/>
    <property type="match status" value="1"/>
</dbReference>
<dbReference type="HAMAP" id="MF_00061">
    <property type="entry name" value="IspE"/>
    <property type="match status" value="1"/>
</dbReference>
<dbReference type="InterPro" id="IPR013750">
    <property type="entry name" value="GHMP_kinase_C_dom"/>
</dbReference>
<dbReference type="InterPro" id="IPR036554">
    <property type="entry name" value="GHMP_kinase_C_sf"/>
</dbReference>
<dbReference type="InterPro" id="IPR006204">
    <property type="entry name" value="GHMP_kinase_N_dom"/>
</dbReference>
<dbReference type="InterPro" id="IPR004424">
    <property type="entry name" value="IspE"/>
</dbReference>
<dbReference type="InterPro" id="IPR020568">
    <property type="entry name" value="Ribosomal_Su5_D2-typ_SF"/>
</dbReference>
<dbReference type="InterPro" id="IPR014721">
    <property type="entry name" value="Ribsml_uS5_D2-typ_fold_subgr"/>
</dbReference>
<dbReference type="NCBIfam" id="TIGR00154">
    <property type="entry name" value="ispE"/>
    <property type="match status" value="1"/>
</dbReference>
<dbReference type="PANTHER" id="PTHR43527">
    <property type="entry name" value="4-DIPHOSPHOCYTIDYL-2-C-METHYL-D-ERYTHRITOL KINASE, CHLOROPLASTIC"/>
    <property type="match status" value="1"/>
</dbReference>
<dbReference type="PANTHER" id="PTHR43527:SF2">
    <property type="entry name" value="4-DIPHOSPHOCYTIDYL-2-C-METHYL-D-ERYTHRITOL KINASE, CHLOROPLASTIC"/>
    <property type="match status" value="1"/>
</dbReference>
<dbReference type="Pfam" id="PF08544">
    <property type="entry name" value="GHMP_kinases_C"/>
    <property type="match status" value="1"/>
</dbReference>
<dbReference type="Pfam" id="PF00288">
    <property type="entry name" value="GHMP_kinases_N"/>
    <property type="match status" value="1"/>
</dbReference>
<dbReference type="PIRSF" id="PIRSF010376">
    <property type="entry name" value="IspE"/>
    <property type="match status" value="1"/>
</dbReference>
<dbReference type="SUPFAM" id="SSF55060">
    <property type="entry name" value="GHMP Kinase, C-terminal domain"/>
    <property type="match status" value="1"/>
</dbReference>
<dbReference type="SUPFAM" id="SSF54211">
    <property type="entry name" value="Ribosomal protein S5 domain 2-like"/>
    <property type="match status" value="1"/>
</dbReference>
<gene>
    <name evidence="1" type="primary">ispE</name>
    <name type="ordered locus">Lreu_0215</name>
</gene>
<accession>A5VI11</accession>
<organism>
    <name type="scientific">Limosilactobacillus reuteri (strain DSM 20016)</name>
    <name type="common">Lactobacillus reuteri</name>
    <dbReference type="NCBI Taxonomy" id="557436"/>
    <lineage>
        <taxon>Bacteria</taxon>
        <taxon>Bacillati</taxon>
        <taxon>Bacillota</taxon>
        <taxon>Bacilli</taxon>
        <taxon>Lactobacillales</taxon>
        <taxon>Lactobacillaceae</taxon>
        <taxon>Limosilactobacillus</taxon>
    </lineage>
</organism>
<comment type="function">
    <text evidence="1">Catalyzes the phosphorylation of the position 2 hydroxy group of 4-diphosphocytidyl-2C-methyl-D-erythritol.</text>
</comment>
<comment type="catalytic activity">
    <reaction evidence="1">
        <text>4-CDP-2-C-methyl-D-erythritol + ATP = 4-CDP-2-C-methyl-D-erythritol 2-phosphate + ADP + H(+)</text>
        <dbReference type="Rhea" id="RHEA:18437"/>
        <dbReference type="ChEBI" id="CHEBI:15378"/>
        <dbReference type="ChEBI" id="CHEBI:30616"/>
        <dbReference type="ChEBI" id="CHEBI:57823"/>
        <dbReference type="ChEBI" id="CHEBI:57919"/>
        <dbReference type="ChEBI" id="CHEBI:456216"/>
        <dbReference type="EC" id="2.7.1.148"/>
    </reaction>
</comment>
<comment type="pathway">
    <text evidence="1">Isoprenoid biosynthesis; isopentenyl diphosphate biosynthesis via DXP pathway; isopentenyl diphosphate from 1-deoxy-D-xylulose 5-phosphate: step 3/6.</text>
</comment>
<comment type="similarity">
    <text evidence="1">Belongs to the GHMP kinase family. IspE subfamily.</text>
</comment>
<reference key="1">
    <citation type="journal article" date="2011" name="PLoS Genet.">
        <title>The evolution of host specialization in the vertebrate gut symbiont Lactobacillus reuteri.</title>
        <authorList>
            <person name="Frese S.A."/>
            <person name="Benson A.K."/>
            <person name="Tannock G.W."/>
            <person name="Loach D.M."/>
            <person name="Kim J."/>
            <person name="Zhang M."/>
            <person name="Oh P.L."/>
            <person name="Heng N.C."/>
            <person name="Patil P.B."/>
            <person name="Juge N."/>
            <person name="Mackenzie D.A."/>
            <person name="Pearson B.M."/>
            <person name="Lapidus A."/>
            <person name="Dalin E."/>
            <person name="Tice H."/>
            <person name="Goltsman E."/>
            <person name="Land M."/>
            <person name="Hauser L."/>
            <person name="Ivanova N."/>
            <person name="Kyrpides N.C."/>
            <person name="Walter J."/>
        </authorList>
    </citation>
    <scope>NUCLEOTIDE SEQUENCE [LARGE SCALE GENOMIC DNA]</scope>
    <source>
        <strain>DSM 20016</strain>
    </source>
</reference>
<evidence type="ECO:0000255" key="1">
    <source>
        <dbReference type="HAMAP-Rule" id="MF_00061"/>
    </source>
</evidence>
<protein>
    <recommendedName>
        <fullName evidence="1">4-diphosphocytidyl-2-C-methyl-D-erythritol kinase</fullName>
        <shortName evidence="1">CMK</shortName>
        <ecNumber evidence="1">2.7.1.148</ecNumber>
    </recommendedName>
    <alternativeName>
        <fullName evidence="1">4-(cytidine-5'-diphospho)-2-C-methyl-D-erythritol kinase</fullName>
    </alternativeName>
</protein>
<keyword id="KW-0067">ATP-binding</keyword>
<keyword id="KW-0414">Isoprene biosynthesis</keyword>
<keyword id="KW-0418">Kinase</keyword>
<keyword id="KW-0547">Nucleotide-binding</keyword>
<keyword id="KW-1185">Reference proteome</keyword>
<keyword id="KW-0808">Transferase</keyword>
<feature type="chain" id="PRO_1000057422" description="4-diphosphocytidyl-2-C-methyl-D-erythritol kinase">
    <location>
        <begin position="1"/>
        <end position="283"/>
    </location>
</feature>
<feature type="active site" evidence="1">
    <location>
        <position position="10"/>
    </location>
</feature>
<feature type="active site" evidence="1">
    <location>
        <position position="137"/>
    </location>
</feature>
<feature type="binding site" evidence="1">
    <location>
        <begin position="95"/>
        <end position="105"/>
    </location>
    <ligand>
        <name>ATP</name>
        <dbReference type="ChEBI" id="CHEBI:30616"/>
    </ligand>
</feature>
<name>ISPE_LIMRD</name>
<proteinExistence type="inferred from homology"/>
<sequence length="283" mass="31666">MIVTEKAPAKLNLSLDTPMRYFDGSPQWDMVMVSADLADYVTVETHRRPATIKVYTNSGFLPNDQRNLAYQAAHILRSRFHCKDGVTIRIKKQIPVAAGLGGGSSDAAAVLRALNSIWRLGLSLSELAKIALTIDSDVPYCIYNKLAHVTGHGEKIELLPPQPHYWAVIAKQKISVSTPQILRQINYEKLQHLNNEALLTNLKKEDWQEATKYMGNVLEPLTMKFYPEIGRLKNKMKELGADVAQMSGTGPTVFAICHTESRAKRIQNSIRGFCRDVHVVTLL</sequence>